<sequence>MVRYSKLAFRQLVRVYDVDVCFTPMIYAKNFIESEKCRSSELSVCEGDSPLIVQFATDDPFVLSEAAEMVYKCSTGVDLNCGCPKHDVRSKGFGSALLSKPELLADMVRQTRARIPDPDFSVSLKIRINHDIEKTVDLCRKAEAAGVTHLTVHGRTPSQRAEPIDIQALRIVKDSVSVPIIANGGITTREEALFLAEQTGVDGIMAANGLLDNPALFAGHEHTPSDCVENFMRLSREYGLDWLLYHQHLQYMLRPVFSAQQRRVFNELNGRLAIDHFLNNLLDI</sequence>
<accession>Q09504</accession>
<reference key="1">
    <citation type="journal article" date="1998" name="Science">
        <title>Genome sequence of the nematode C. elegans: a platform for investigating biology.</title>
        <authorList>
            <consortium name="The C. elegans sequencing consortium"/>
        </authorList>
    </citation>
    <scope>NUCLEOTIDE SEQUENCE [LARGE SCALE GENOMIC DNA]</scope>
    <source>
        <strain>Bristol N2</strain>
    </source>
</reference>
<proteinExistence type="inferred from homology"/>
<gene>
    <name type="ORF">C45G9.2</name>
</gene>
<organism>
    <name type="scientific">Caenorhabditis elegans</name>
    <dbReference type="NCBI Taxonomy" id="6239"/>
    <lineage>
        <taxon>Eukaryota</taxon>
        <taxon>Metazoa</taxon>
        <taxon>Ecdysozoa</taxon>
        <taxon>Nematoda</taxon>
        <taxon>Chromadorea</taxon>
        <taxon>Rhabditida</taxon>
        <taxon>Rhabditina</taxon>
        <taxon>Rhabditomorpha</taxon>
        <taxon>Rhabditoidea</taxon>
        <taxon>Rhabditidae</taxon>
        <taxon>Peloderinae</taxon>
        <taxon>Caenorhabditis</taxon>
    </lineage>
</organism>
<comment type="function">
    <text evidence="1">Catalyzes the synthesis of dihydrouridine, a modified base found in the D-loop of most tRNAs.</text>
</comment>
<comment type="cofactor">
    <cofactor evidence="2">
        <name>FMN</name>
        <dbReference type="ChEBI" id="CHEBI:58210"/>
    </cofactor>
</comment>
<comment type="similarity">
    <text evidence="3">Belongs to the Dus family.</text>
</comment>
<keyword id="KW-0285">Flavoprotein</keyword>
<keyword id="KW-0288">FMN</keyword>
<keyword id="KW-0560">Oxidoreductase</keyword>
<keyword id="KW-1185">Reference proteome</keyword>
<keyword id="KW-0819">tRNA processing</keyword>
<evidence type="ECO:0000250" key="1"/>
<evidence type="ECO:0000250" key="2">
    <source>
        <dbReference type="UniProtKB" id="Q5SMC7"/>
    </source>
</evidence>
<evidence type="ECO:0000305" key="3"/>
<feature type="chain" id="PRO_0000162159" description="Uncharacterized tRNA-dihydrouridine synthase-like protein C45G9.2">
    <location>
        <begin position="1"/>
        <end position="284"/>
    </location>
</feature>
<feature type="active site" description="Proton donor" evidence="2">
    <location>
        <position position="83"/>
    </location>
</feature>
<feature type="binding site" evidence="2">
    <location>
        <position position="54"/>
    </location>
    <ligand>
        <name>FMN</name>
        <dbReference type="ChEBI" id="CHEBI:58210"/>
    </ligand>
</feature>
<feature type="binding site" evidence="2">
    <location>
        <position position="125"/>
    </location>
    <ligand>
        <name>FMN</name>
        <dbReference type="ChEBI" id="CHEBI:58210"/>
    </ligand>
</feature>
<feature type="binding site" evidence="2">
    <location>
        <position position="153"/>
    </location>
    <ligand>
        <name>FMN</name>
        <dbReference type="ChEBI" id="CHEBI:58210"/>
    </ligand>
</feature>
<feature type="binding site" evidence="2">
    <location>
        <begin position="183"/>
        <end position="185"/>
    </location>
    <ligand>
        <name>FMN</name>
        <dbReference type="ChEBI" id="CHEBI:58210"/>
    </ligand>
</feature>
<feature type="binding site" evidence="2">
    <location>
        <begin position="207"/>
        <end position="208"/>
    </location>
    <ligand>
        <name>FMN</name>
        <dbReference type="ChEBI" id="CHEBI:58210"/>
    </ligand>
</feature>
<protein>
    <recommendedName>
        <fullName>Uncharacterized tRNA-dihydrouridine synthase-like protein C45G9.2</fullName>
        <ecNumber>1.3.1.-</ecNumber>
    </recommendedName>
</protein>
<name>YQI2_CAEEL</name>
<dbReference type="EC" id="1.3.1.-"/>
<dbReference type="EMBL" id="FO080873">
    <property type="protein sequence ID" value="CCD67391.1"/>
    <property type="molecule type" value="Genomic_DNA"/>
</dbReference>
<dbReference type="PIR" id="A88449">
    <property type="entry name" value="A88449"/>
</dbReference>
<dbReference type="RefSeq" id="NP_498078.2">
    <property type="nucleotide sequence ID" value="NM_065677.6"/>
</dbReference>
<dbReference type="SMR" id="Q09504"/>
<dbReference type="BioGRID" id="48304">
    <property type="interactions" value="1"/>
</dbReference>
<dbReference type="FunCoup" id="Q09504">
    <property type="interactions" value="1887"/>
</dbReference>
<dbReference type="STRING" id="6239.C45G9.2.1"/>
<dbReference type="PaxDb" id="6239-C45G9.2"/>
<dbReference type="PeptideAtlas" id="Q09504"/>
<dbReference type="EnsemblMetazoa" id="C45G9.2.1">
    <property type="protein sequence ID" value="C45G9.2.1"/>
    <property type="gene ID" value="WBGene00016674"/>
</dbReference>
<dbReference type="GeneID" id="183479"/>
<dbReference type="KEGG" id="cel:CELE_C45G9.2"/>
<dbReference type="UCSC" id="C45G9.2">
    <property type="organism name" value="c. elegans"/>
</dbReference>
<dbReference type="AGR" id="WB:WBGene00016674"/>
<dbReference type="CTD" id="183479"/>
<dbReference type="WormBase" id="C45G9.2">
    <property type="protein sequence ID" value="CE29722"/>
    <property type="gene ID" value="WBGene00016674"/>
</dbReference>
<dbReference type="eggNOG" id="KOG2335">
    <property type="taxonomic scope" value="Eukaryota"/>
</dbReference>
<dbReference type="GeneTree" id="ENSGT00550000074907"/>
<dbReference type="HOGENOM" id="CLU_013299_4_2_1"/>
<dbReference type="InParanoid" id="Q09504"/>
<dbReference type="OMA" id="QRPHHDI"/>
<dbReference type="OrthoDB" id="9977870at2759"/>
<dbReference type="PhylomeDB" id="Q09504"/>
<dbReference type="PRO" id="PR:Q09504"/>
<dbReference type="Proteomes" id="UP000001940">
    <property type="component" value="Chromosome III"/>
</dbReference>
<dbReference type="Bgee" id="WBGene00016674">
    <property type="expression patterns" value="Expressed in germ line (C elegans) and 4 other cell types or tissues"/>
</dbReference>
<dbReference type="GO" id="GO:0050660">
    <property type="term" value="F:flavin adenine dinucleotide binding"/>
    <property type="evidence" value="ECO:0007669"/>
    <property type="project" value="InterPro"/>
</dbReference>
<dbReference type="GO" id="GO:0017150">
    <property type="term" value="F:tRNA dihydrouridine synthase activity"/>
    <property type="evidence" value="ECO:0000318"/>
    <property type="project" value="GO_Central"/>
</dbReference>
<dbReference type="CDD" id="cd02801">
    <property type="entry name" value="DUS_like_FMN"/>
    <property type="match status" value="1"/>
</dbReference>
<dbReference type="FunFam" id="3.20.20.70:FF:000221">
    <property type="entry name" value="tRNA-dihydrouridine synthase"/>
    <property type="match status" value="1"/>
</dbReference>
<dbReference type="Gene3D" id="3.20.20.70">
    <property type="entry name" value="Aldolase class I"/>
    <property type="match status" value="1"/>
</dbReference>
<dbReference type="InterPro" id="IPR013785">
    <property type="entry name" value="Aldolase_TIM"/>
</dbReference>
<dbReference type="InterPro" id="IPR035587">
    <property type="entry name" value="DUS-like_FMN-bd"/>
</dbReference>
<dbReference type="InterPro" id="IPR001269">
    <property type="entry name" value="DUS_fam"/>
</dbReference>
<dbReference type="InterPro" id="IPR018517">
    <property type="entry name" value="tRNA_hU_synthase_CS"/>
</dbReference>
<dbReference type="PANTHER" id="PTHR11082">
    <property type="entry name" value="TRNA-DIHYDROURIDINE SYNTHASE"/>
    <property type="match status" value="1"/>
</dbReference>
<dbReference type="PANTHER" id="PTHR11082:SF31">
    <property type="entry name" value="TRNA-DIHYDROURIDINE(20A_20B) SYNTHASE [NAD(P)+]-LIKE"/>
    <property type="match status" value="1"/>
</dbReference>
<dbReference type="Pfam" id="PF01207">
    <property type="entry name" value="Dus"/>
    <property type="match status" value="1"/>
</dbReference>
<dbReference type="PIRSF" id="PIRSF006621">
    <property type="entry name" value="Dus"/>
    <property type="match status" value="1"/>
</dbReference>
<dbReference type="SUPFAM" id="SSF51395">
    <property type="entry name" value="FMN-linked oxidoreductases"/>
    <property type="match status" value="1"/>
</dbReference>
<dbReference type="PROSITE" id="PS01136">
    <property type="entry name" value="UPF0034"/>
    <property type="match status" value="1"/>
</dbReference>